<dbReference type="EMBL" id="AL591688">
    <property type="protein sequence ID" value="CAC46075.1"/>
    <property type="molecule type" value="Genomic_DNA"/>
</dbReference>
<dbReference type="RefSeq" id="NP_385602.1">
    <property type="nucleotide sequence ID" value="NC_003047.1"/>
</dbReference>
<dbReference type="RefSeq" id="WP_003534991.1">
    <property type="nucleotide sequence ID" value="NC_003047.1"/>
</dbReference>
<dbReference type="SMR" id="Q92Q54"/>
<dbReference type="EnsemblBacteria" id="CAC46075">
    <property type="protein sequence ID" value="CAC46075"/>
    <property type="gene ID" value="SMc02100"/>
</dbReference>
<dbReference type="GeneID" id="89575820"/>
<dbReference type="KEGG" id="sme:SMc02100"/>
<dbReference type="PATRIC" id="fig|266834.11.peg.2916"/>
<dbReference type="eggNOG" id="COG0264">
    <property type="taxonomic scope" value="Bacteria"/>
</dbReference>
<dbReference type="HOGENOM" id="CLU_047155_2_0_5"/>
<dbReference type="OrthoDB" id="9808348at2"/>
<dbReference type="Proteomes" id="UP000001976">
    <property type="component" value="Chromosome"/>
</dbReference>
<dbReference type="GO" id="GO:0005737">
    <property type="term" value="C:cytoplasm"/>
    <property type="evidence" value="ECO:0007669"/>
    <property type="project" value="UniProtKB-SubCell"/>
</dbReference>
<dbReference type="GO" id="GO:0003746">
    <property type="term" value="F:translation elongation factor activity"/>
    <property type="evidence" value="ECO:0007669"/>
    <property type="project" value="UniProtKB-UniRule"/>
</dbReference>
<dbReference type="CDD" id="cd14275">
    <property type="entry name" value="UBA_EF-Ts"/>
    <property type="match status" value="1"/>
</dbReference>
<dbReference type="FunFam" id="1.10.286.20:FF:000001">
    <property type="entry name" value="Elongation factor Ts"/>
    <property type="match status" value="1"/>
</dbReference>
<dbReference type="FunFam" id="1.10.8.10:FF:000001">
    <property type="entry name" value="Elongation factor Ts"/>
    <property type="match status" value="1"/>
</dbReference>
<dbReference type="Gene3D" id="1.10.286.20">
    <property type="match status" value="1"/>
</dbReference>
<dbReference type="Gene3D" id="1.10.8.10">
    <property type="entry name" value="DNA helicase RuvA subunit, C-terminal domain"/>
    <property type="match status" value="1"/>
</dbReference>
<dbReference type="Gene3D" id="3.30.479.20">
    <property type="entry name" value="Elongation factor Ts, dimerisation domain"/>
    <property type="match status" value="2"/>
</dbReference>
<dbReference type="HAMAP" id="MF_00050">
    <property type="entry name" value="EF_Ts"/>
    <property type="match status" value="1"/>
</dbReference>
<dbReference type="InterPro" id="IPR036402">
    <property type="entry name" value="EF-Ts_dimer_sf"/>
</dbReference>
<dbReference type="InterPro" id="IPR001816">
    <property type="entry name" value="Transl_elong_EFTs/EF1B"/>
</dbReference>
<dbReference type="InterPro" id="IPR014039">
    <property type="entry name" value="Transl_elong_EFTs/EF1B_dimer"/>
</dbReference>
<dbReference type="InterPro" id="IPR018101">
    <property type="entry name" value="Transl_elong_Ts_CS"/>
</dbReference>
<dbReference type="InterPro" id="IPR009060">
    <property type="entry name" value="UBA-like_sf"/>
</dbReference>
<dbReference type="NCBIfam" id="TIGR00116">
    <property type="entry name" value="tsf"/>
    <property type="match status" value="1"/>
</dbReference>
<dbReference type="PANTHER" id="PTHR11741">
    <property type="entry name" value="ELONGATION FACTOR TS"/>
    <property type="match status" value="1"/>
</dbReference>
<dbReference type="PANTHER" id="PTHR11741:SF0">
    <property type="entry name" value="ELONGATION FACTOR TS, MITOCHONDRIAL"/>
    <property type="match status" value="1"/>
</dbReference>
<dbReference type="Pfam" id="PF00889">
    <property type="entry name" value="EF_TS"/>
    <property type="match status" value="1"/>
</dbReference>
<dbReference type="SUPFAM" id="SSF54713">
    <property type="entry name" value="Elongation factor Ts (EF-Ts), dimerisation domain"/>
    <property type="match status" value="1"/>
</dbReference>
<dbReference type="SUPFAM" id="SSF46934">
    <property type="entry name" value="UBA-like"/>
    <property type="match status" value="1"/>
</dbReference>
<dbReference type="PROSITE" id="PS01126">
    <property type="entry name" value="EF_TS_1"/>
    <property type="match status" value="1"/>
</dbReference>
<dbReference type="PROSITE" id="PS01127">
    <property type="entry name" value="EF_TS_2"/>
    <property type="match status" value="1"/>
</dbReference>
<evidence type="ECO:0000255" key="1">
    <source>
        <dbReference type="HAMAP-Rule" id="MF_00050"/>
    </source>
</evidence>
<proteinExistence type="inferred from homology"/>
<accession>Q92Q54</accession>
<keyword id="KW-0963">Cytoplasm</keyword>
<keyword id="KW-0251">Elongation factor</keyword>
<keyword id="KW-0648">Protein biosynthesis</keyword>
<keyword id="KW-1185">Reference proteome</keyword>
<gene>
    <name evidence="1" type="primary">tsf</name>
    <name type="ordered locus">R01496</name>
    <name type="ORF">SMc02100</name>
</gene>
<protein>
    <recommendedName>
        <fullName evidence="1">Elongation factor Ts</fullName>
        <shortName evidence="1">EF-Ts</shortName>
    </recommendedName>
</protein>
<comment type="function">
    <text evidence="1">Associates with the EF-Tu.GDP complex and induces the exchange of GDP to GTP. It remains bound to the aminoacyl-tRNA.EF-Tu.GTP complex up to the GTP hydrolysis stage on the ribosome.</text>
</comment>
<comment type="subcellular location">
    <subcellularLocation>
        <location evidence="1">Cytoplasm</location>
    </subcellularLocation>
</comment>
<comment type="similarity">
    <text evidence="1">Belongs to the EF-Ts family.</text>
</comment>
<organism>
    <name type="scientific">Rhizobium meliloti (strain 1021)</name>
    <name type="common">Ensifer meliloti</name>
    <name type="synonym">Sinorhizobium meliloti</name>
    <dbReference type="NCBI Taxonomy" id="266834"/>
    <lineage>
        <taxon>Bacteria</taxon>
        <taxon>Pseudomonadati</taxon>
        <taxon>Pseudomonadota</taxon>
        <taxon>Alphaproteobacteria</taxon>
        <taxon>Hyphomicrobiales</taxon>
        <taxon>Rhizobiaceae</taxon>
        <taxon>Sinorhizobium/Ensifer group</taxon>
        <taxon>Sinorhizobium</taxon>
    </lineage>
</organism>
<name>EFTS_RHIME</name>
<reference key="1">
    <citation type="journal article" date="2001" name="Proc. Natl. Acad. Sci. U.S.A.">
        <title>Analysis of the chromosome sequence of the legume symbiont Sinorhizobium meliloti strain 1021.</title>
        <authorList>
            <person name="Capela D."/>
            <person name="Barloy-Hubler F."/>
            <person name="Gouzy J."/>
            <person name="Bothe G."/>
            <person name="Ampe F."/>
            <person name="Batut J."/>
            <person name="Boistard P."/>
            <person name="Becker A."/>
            <person name="Boutry M."/>
            <person name="Cadieu E."/>
            <person name="Dreano S."/>
            <person name="Gloux S."/>
            <person name="Godrie T."/>
            <person name="Goffeau A."/>
            <person name="Kahn D."/>
            <person name="Kiss E."/>
            <person name="Lelaure V."/>
            <person name="Masuy D."/>
            <person name="Pohl T."/>
            <person name="Portetelle D."/>
            <person name="Puehler A."/>
            <person name="Purnelle B."/>
            <person name="Ramsperger U."/>
            <person name="Renard C."/>
            <person name="Thebault P."/>
            <person name="Vandenbol M."/>
            <person name="Weidner S."/>
            <person name="Galibert F."/>
        </authorList>
    </citation>
    <scope>NUCLEOTIDE SEQUENCE [LARGE SCALE GENOMIC DNA]</scope>
    <source>
        <strain>1021</strain>
    </source>
</reference>
<reference key="2">
    <citation type="journal article" date="2001" name="Science">
        <title>The composite genome of the legume symbiont Sinorhizobium meliloti.</title>
        <authorList>
            <person name="Galibert F."/>
            <person name="Finan T.M."/>
            <person name="Long S.R."/>
            <person name="Puehler A."/>
            <person name="Abola P."/>
            <person name="Ampe F."/>
            <person name="Barloy-Hubler F."/>
            <person name="Barnett M.J."/>
            <person name="Becker A."/>
            <person name="Boistard P."/>
            <person name="Bothe G."/>
            <person name="Boutry M."/>
            <person name="Bowser L."/>
            <person name="Buhrmester J."/>
            <person name="Cadieu E."/>
            <person name="Capela D."/>
            <person name="Chain P."/>
            <person name="Cowie A."/>
            <person name="Davis R.W."/>
            <person name="Dreano S."/>
            <person name="Federspiel N.A."/>
            <person name="Fisher R.F."/>
            <person name="Gloux S."/>
            <person name="Godrie T."/>
            <person name="Goffeau A."/>
            <person name="Golding B."/>
            <person name="Gouzy J."/>
            <person name="Gurjal M."/>
            <person name="Hernandez-Lucas I."/>
            <person name="Hong A."/>
            <person name="Huizar L."/>
            <person name="Hyman R.W."/>
            <person name="Jones T."/>
            <person name="Kahn D."/>
            <person name="Kahn M.L."/>
            <person name="Kalman S."/>
            <person name="Keating D.H."/>
            <person name="Kiss E."/>
            <person name="Komp C."/>
            <person name="Lelaure V."/>
            <person name="Masuy D."/>
            <person name="Palm C."/>
            <person name="Peck M.C."/>
            <person name="Pohl T.M."/>
            <person name="Portetelle D."/>
            <person name="Purnelle B."/>
            <person name="Ramsperger U."/>
            <person name="Surzycki R."/>
            <person name="Thebault P."/>
            <person name="Vandenbol M."/>
            <person name="Vorhoelter F.J."/>
            <person name="Weidner S."/>
            <person name="Wells D.H."/>
            <person name="Wong K."/>
            <person name="Yeh K.-C."/>
            <person name="Batut J."/>
        </authorList>
    </citation>
    <scope>NUCLEOTIDE SEQUENCE [LARGE SCALE GENOMIC DNA]</scope>
    <source>
        <strain>1021</strain>
    </source>
</reference>
<feature type="chain" id="PRO_0000161181" description="Elongation factor Ts">
    <location>
        <begin position="1"/>
        <end position="307"/>
    </location>
</feature>
<feature type="region of interest" description="Involved in Mg(2+) ion dislocation from EF-Tu" evidence="1">
    <location>
        <begin position="79"/>
        <end position="82"/>
    </location>
</feature>
<sequence length="307" mass="32102">MTVTAAMVKELREKTGAGMMDCKKALAETNGDMEAAIDWLRAKGIAKADKKSGRTAAEGLIGIASSGTKAVVVEINSETDFVARNDAFQELVRGVANVALGTDGSVAAVSKATYPATGKSVEDTIKDAIATIGENMTLRRSALLEVEDGVVATYVHNAAGEGIGKLGVLVALKSTGDKEALNAIGRQVAMHVAATNPLAVRSSEIDPAVAERERNVFIEQSRASGKPDNIIEKMVDGRMRKFFEEVALLSQAFVMNPDQTVEAAIKEAEKSVGAPIEVAGIARLLLGEGVEKEESDFAAEVAAAAKG</sequence>